<feature type="signal peptide" evidence="2">
    <location>
        <begin position="1"/>
        <end position="18"/>
    </location>
</feature>
<feature type="propeptide" id="PRO_0000003108" evidence="3">
    <location>
        <begin position="19"/>
        <end position="43"/>
    </location>
</feature>
<feature type="peptide" id="PRO_0000003109" description="Maximin-3">
    <location>
        <begin position="44"/>
        <end position="70"/>
    </location>
</feature>
<feature type="propeptide" id="PRO_0000003110" evidence="1">
    <location>
        <begin position="73"/>
        <end position="122"/>
    </location>
</feature>
<feature type="peptide" id="PRO_0000003111" description="Maximin-H14">
    <location>
        <begin position="124"/>
        <end position="143"/>
    </location>
</feature>
<feature type="modified residue" description="Isoleucine amide" evidence="4">
    <location>
        <position position="143"/>
    </location>
</feature>
<protein>
    <recommendedName>
        <fullName>Maximins 3/H14</fullName>
    </recommendedName>
    <component>
        <recommendedName>
            <fullName>Maximin-3</fullName>
        </recommendedName>
    </component>
    <component>
        <recommendedName>
            <fullName>Maximin-H14</fullName>
        </recommendedName>
    </component>
</protein>
<keyword id="KW-0027">Amidation</keyword>
<keyword id="KW-0878">Amphibian defense peptide</keyword>
<keyword id="KW-0044">Antibiotic</keyword>
<keyword id="KW-0929">Antimicrobial</keyword>
<keyword id="KW-0165">Cleavage on pair of basic residues</keyword>
<keyword id="KW-0204">Cytolysis</keyword>
<keyword id="KW-0903">Direct protein sequencing</keyword>
<keyword id="KW-0295">Fungicide</keyword>
<keyword id="KW-0354">Hemolysis</keyword>
<keyword id="KW-0964">Secreted</keyword>
<keyword id="KW-0732">Signal</keyword>
<accession>Q58T46</accession>
<evidence type="ECO:0000250" key="1"/>
<evidence type="ECO:0000255" key="2"/>
<evidence type="ECO:0000269" key="3">
    <source>
    </source>
</evidence>
<evidence type="ECO:0000269" key="4">
    <source>
    </source>
</evidence>
<evidence type="ECO:0000305" key="5"/>
<comment type="function">
    <text evidence="3">Maximin-3 shows antibacterial activity against both Gram-positive and Gram-negative bacteria. It also shows antimicrobial activity against the fungus C.albicans, but not against A.flavus nor P.uticale. It has little hemolytic activity. It possess a significant cytotoxicity against tumor cell lines. It possess a significant anti-HIV activity. It shows high spermicidal activity.</text>
</comment>
<comment type="function">
    <text evidence="1">Maximin-H14 shows antimicrobial activity against bacteria and against the fungus C.albicans. Shows strong hemolytic activity (By similarity).</text>
</comment>
<comment type="subcellular location">
    <subcellularLocation>
        <location>Secreted</location>
    </subcellularLocation>
</comment>
<comment type="tissue specificity">
    <text>Expressed by the skin glands.</text>
</comment>
<comment type="mass spectrometry">
    <molecule>Maximin-3</molecule>
</comment>
<comment type="similarity">
    <text evidence="5">Belongs to the bombinin family.</text>
</comment>
<organism>
    <name type="scientific">Bombina maxima</name>
    <name type="common">Giant fire-bellied toad</name>
    <name type="synonym">Chinese red belly toad</name>
    <dbReference type="NCBI Taxonomy" id="161274"/>
    <lineage>
        <taxon>Eukaryota</taxon>
        <taxon>Metazoa</taxon>
        <taxon>Chordata</taxon>
        <taxon>Craniata</taxon>
        <taxon>Vertebrata</taxon>
        <taxon>Euteleostomi</taxon>
        <taxon>Amphibia</taxon>
        <taxon>Batrachia</taxon>
        <taxon>Anura</taxon>
        <taxon>Bombinatoridae</taxon>
        <taxon>Bombina</taxon>
    </lineage>
</organism>
<name>M3H14_BOMMX</name>
<proteinExistence type="evidence at protein level"/>
<reference key="1">
    <citation type="journal article" date="2005" name="Eur. J. Immunol.">
        <title>Variety of antimicrobial peptides in the Bombina maxima toad and evidence of their rapid diversification.</title>
        <authorList>
            <person name="Lee W.-H."/>
            <person name="Li Y."/>
            <person name="Lai R."/>
            <person name="Li S."/>
            <person name="Zhang Y."/>
            <person name="Wang W."/>
        </authorList>
    </citation>
    <scope>NUCLEOTIDE SEQUENCE [MRNA]</scope>
    <scope>PROTEIN SEQUENCE OF 44-70 AND 124-143</scope>
    <scope>AMIDATION AT ILE-143</scope>
    <scope>MASS SPECTROMETRY</scope>
    <source>
        <tissue>Skin</tissue>
    </source>
</reference>
<reference key="2">
    <citation type="journal article" date="2002" name="Peptides">
        <title>Antimicrobial peptides from skin secretions of Chinese red belly toad Bombina maxima.</title>
        <authorList>
            <person name="Lai R."/>
            <person name="Zheng Y.-T."/>
            <person name="Shen J.-H."/>
            <person name="Liu G.-J."/>
            <person name="Liu H."/>
            <person name="Lee W.-H."/>
            <person name="Tang S.-Z."/>
            <person name="Zhang Y."/>
        </authorList>
    </citation>
    <scope>PROTEIN SEQUENCE OF 44-70</scope>
    <scope>MASS SPECTROMETRY</scope>
    <scope>FUNCTION OF MAXIMIN-3</scope>
</reference>
<dbReference type="EMBL" id="AY849014">
    <property type="protein sequence ID" value="AAX50235.1"/>
    <property type="molecule type" value="mRNA"/>
</dbReference>
<dbReference type="SMR" id="Q58T46"/>
<dbReference type="GO" id="GO:0005576">
    <property type="term" value="C:extracellular region"/>
    <property type="evidence" value="ECO:0007669"/>
    <property type="project" value="UniProtKB-SubCell"/>
</dbReference>
<dbReference type="GO" id="GO:0042742">
    <property type="term" value="P:defense response to bacterium"/>
    <property type="evidence" value="ECO:0007669"/>
    <property type="project" value="UniProtKB-KW"/>
</dbReference>
<dbReference type="GO" id="GO:0050832">
    <property type="term" value="P:defense response to fungus"/>
    <property type="evidence" value="ECO:0007669"/>
    <property type="project" value="UniProtKB-KW"/>
</dbReference>
<dbReference type="GO" id="GO:0031640">
    <property type="term" value="P:killing of cells of another organism"/>
    <property type="evidence" value="ECO:0007669"/>
    <property type="project" value="UniProtKB-KW"/>
</dbReference>
<dbReference type="InterPro" id="IPR007962">
    <property type="entry name" value="Bombinin"/>
</dbReference>
<dbReference type="Pfam" id="PF05298">
    <property type="entry name" value="Bombinin"/>
    <property type="match status" value="1"/>
</dbReference>
<sequence>MNFKYIVAVSFLIASAYARSVQNDEQSLSQRDVLEEESLREIRGIGGKILSGLKTALKGAAKELASTYLHRKRTAEEHEVMKRLEAVMRDLDSLDYPEEASERETRGFNQDEIANLFTKKEKRILGPVLGLVGEPLGGLIKKIG</sequence>